<feature type="chain" id="PRO_1000088309" description="Beta-ketoacyl-[acyl-carrier-protein] synthase III">
    <location>
        <begin position="1"/>
        <end position="319"/>
    </location>
</feature>
<feature type="region of interest" description="ACP-binding" evidence="1">
    <location>
        <begin position="247"/>
        <end position="251"/>
    </location>
</feature>
<feature type="active site" evidence="1">
    <location>
        <position position="115"/>
    </location>
</feature>
<feature type="active site" evidence="1">
    <location>
        <position position="246"/>
    </location>
</feature>
<feature type="active site" evidence="1">
    <location>
        <position position="276"/>
    </location>
</feature>
<sequence>MTYARIQGVGSYIPQQILSNADLEKMVNTTDEWIMQRVGVRERHVIANSPDNTTTMAVDAAKRAIEMAGIDPAVIDMIIVGTATAEYYFPSTACLVQKHLNLREDIPAFDINAACAGFVYALSIADQYIRNEGAKHILVIGVDSLTKVVDWKDRSTCILFGDGAGAVILQAHKEPGILNTILHANGDYSDLITAKSGVWERESVPHLHMYGKEVFKLAVTKLGEIVDEIIEKSGLKQSGIDWLIPHQANLRIIEATAKRLGLPRERVILTIEQHGNTSAASIPLALDAAVRAGKIKRGDTLLLEAFGAGLAWGAALLKL</sequence>
<reference key="1">
    <citation type="submission" date="2007-11" db="EMBL/GenBank/DDBJ databases">
        <title>Genome sequencing of phylogenetically and phenotypically diverse Coxiella burnetii isolates.</title>
        <authorList>
            <person name="Seshadri R."/>
            <person name="Samuel J.E."/>
        </authorList>
    </citation>
    <scope>NUCLEOTIDE SEQUENCE [LARGE SCALE GENOMIC DNA]</scope>
    <source>
        <strain>RSA 331 / Henzerling II</strain>
    </source>
</reference>
<protein>
    <recommendedName>
        <fullName evidence="1">Beta-ketoacyl-[acyl-carrier-protein] synthase III</fullName>
        <shortName evidence="1">Beta-ketoacyl-ACP synthase III</shortName>
        <shortName evidence="1">KAS III</shortName>
        <ecNumber evidence="1">2.3.1.180</ecNumber>
    </recommendedName>
    <alternativeName>
        <fullName evidence="1">3-oxoacyl-[acyl-carrier-protein] synthase 3</fullName>
    </alternativeName>
    <alternativeName>
        <fullName evidence="1">3-oxoacyl-[acyl-carrier-protein] synthase III</fullName>
    </alternativeName>
</protein>
<comment type="function">
    <text evidence="1">Catalyzes the condensation reaction of fatty acid synthesis by the addition to an acyl acceptor of two carbons from malonyl-ACP. Catalyzes the first condensation reaction which initiates fatty acid synthesis and may therefore play a role in governing the total rate of fatty acid production. Possesses both acetoacetyl-ACP synthase and acetyl transacylase activities. Its substrate specificity determines the biosynthesis of branched-chain and/or straight-chain of fatty acids.</text>
</comment>
<comment type="catalytic activity">
    <reaction evidence="1">
        <text>malonyl-[ACP] + acetyl-CoA + H(+) = 3-oxobutanoyl-[ACP] + CO2 + CoA</text>
        <dbReference type="Rhea" id="RHEA:12080"/>
        <dbReference type="Rhea" id="RHEA-COMP:9623"/>
        <dbReference type="Rhea" id="RHEA-COMP:9625"/>
        <dbReference type="ChEBI" id="CHEBI:15378"/>
        <dbReference type="ChEBI" id="CHEBI:16526"/>
        <dbReference type="ChEBI" id="CHEBI:57287"/>
        <dbReference type="ChEBI" id="CHEBI:57288"/>
        <dbReference type="ChEBI" id="CHEBI:78449"/>
        <dbReference type="ChEBI" id="CHEBI:78450"/>
        <dbReference type="EC" id="2.3.1.180"/>
    </reaction>
</comment>
<comment type="pathway">
    <text evidence="1">Lipid metabolism; fatty acid biosynthesis.</text>
</comment>
<comment type="subunit">
    <text evidence="1">Homodimer.</text>
</comment>
<comment type="subcellular location">
    <subcellularLocation>
        <location evidence="1">Cytoplasm</location>
    </subcellularLocation>
</comment>
<comment type="domain">
    <text evidence="1">The last Arg residue of the ACP-binding site is essential for the weak association between ACP/AcpP and FabH.</text>
</comment>
<comment type="similarity">
    <text evidence="1">Belongs to the thiolase-like superfamily. FabH family.</text>
</comment>
<organism>
    <name type="scientific">Coxiella burnetii (strain RSA 331 / Henzerling II)</name>
    <dbReference type="NCBI Taxonomy" id="360115"/>
    <lineage>
        <taxon>Bacteria</taxon>
        <taxon>Pseudomonadati</taxon>
        <taxon>Pseudomonadota</taxon>
        <taxon>Gammaproteobacteria</taxon>
        <taxon>Legionellales</taxon>
        <taxon>Coxiellaceae</taxon>
        <taxon>Coxiella</taxon>
    </lineage>
</organism>
<dbReference type="EC" id="2.3.1.180" evidence="1"/>
<dbReference type="EMBL" id="CP000890">
    <property type="protein sequence ID" value="ABX78580.1"/>
    <property type="molecule type" value="Genomic_DNA"/>
</dbReference>
<dbReference type="RefSeq" id="WP_012220235.1">
    <property type="nucleotide sequence ID" value="NC_010117.1"/>
</dbReference>
<dbReference type="SMR" id="A9NBY3"/>
<dbReference type="KEGG" id="cbs:COXBURSA331_A0602"/>
<dbReference type="HOGENOM" id="CLU_039592_4_1_6"/>
<dbReference type="UniPathway" id="UPA00094"/>
<dbReference type="GO" id="GO:0005737">
    <property type="term" value="C:cytoplasm"/>
    <property type="evidence" value="ECO:0007669"/>
    <property type="project" value="UniProtKB-SubCell"/>
</dbReference>
<dbReference type="GO" id="GO:0004315">
    <property type="term" value="F:3-oxoacyl-[acyl-carrier-protein] synthase activity"/>
    <property type="evidence" value="ECO:0007669"/>
    <property type="project" value="InterPro"/>
</dbReference>
<dbReference type="GO" id="GO:0033818">
    <property type="term" value="F:beta-ketoacyl-acyl-carrier-protein synthase III activity"/>
    <property type="evidence" value="ECO:0007669"/>
    <property type="project" value="UniProtKB-UniRule"/>
</dbReference>
<dbReference type="GO" id="GO:0006633">
    <property type="term" value="P:fatty acid biosynthetic process"/>
    <property type="evidence" value="ECO:0007669"/>
    <property type="project" value="UniProtKB-UniRule"/>
</dbReference>
<dbReference type="CDD" id="cd00830">
    <property type="entry name" value="KAS_III"/>
    <property type="match status" value="1"/>
</dbReference>
<dbReference type="FunFam" id="3.40.47.10:FF:000004">
    <property type="entry name" value="3-oxoacyl-[acyl-carrier-protein] synthase 3"/>
    <property type="match status" value="1"/>
</dbReference>
<dbReference type="Gene3D" id="3.40.47.10">
    <property type="match status" value="1"/>
</dbReference>
<dbReference type="HAMAP" id="MF_01815">
    <property type="entry name" value="FabH"/>
    <property type="match status" value="1"/>
</dbReference>
<dbReference type="InterPro" id="IPR013747">
    <property type="entry name" value="ACP_syn_III_C"/>
</dbReference>
<dbReference type="InterPro" id="IPR013751">
    <property type="entry name" value="ACP_syn_III_N"/>
</dbReference>
<dbReference type="InterPro" id="IPR004655">
    <property type="entry name" value="FabH"/>
</dbReference>
<dbReference type="InterPro" id="IPR016039">
    <property type="entry name" value="Thiolase-like"/>
</dbReference>
<dbReference type="NCBIfam" id="TIGR00747">
    <property type="entry name" value="fabH"/>
    <property type="match status" value="1"/>
</dbReference>
<dbReference type="NCBIfam" id="NF006829">
    <property type="entry name" value="PRK09352.1"/>
    <property type="match status" value="1"/>
</dbReference>
<dbReference type="PANTHER" id="PTHR43091">
    <property type="entry name" value="3-OXOACYL-[ACYL-CARRIER-PROTEIN] SYNTHASE"/>
    <property type="match status" value="1"/>
</dbReference>
<dbReference type="PANTHER" id="PTHR43091:SF1">
    <property type="entry name" value="BETA-KETOACYL-[ACYL-CARRIER-PROTEIN] SYNTHASE III, CHLOROPLASTIC"/>
    <property type="match status" value="1"/>
</dbReference>
<dbReference type="Pfam" id="PF08545">
    <property type="entry name" value="ACP_syn_III"/>
    <property type="match status" value="1"/>
</dbReference>
<dbReference type="Pfam" id="PF08541">
    <property type="entry name" value="ACP_syn_III_C"/>
    <property type="match status" value="1"/>
</dbReference>
<dbReference type="SUPFAM" id="SSF53901">
    <property type="entry name" value="Thiolase-like"/>
    <property type="match status" value="1"/>
</dbReference>
<evidence type="ECO:0000255" key="1">
    <source>
        <dbReference type="HAMAP-Rule" id="MF_01815"/>
    </source>
</evidence>
<keyword id="KW-0012">Acyltransferase</keyword>
<keyword id="KW-0963">Cytoplasm</keyword>
<keyword id="KW-0275">Fatty acid biosynthesis</keyword>
<keyword id="KW-0276">Fatty acid metabolism</keyword>
<keyword id="KW-0444">Lipid biosynthesis</keyword>
<keyword id="KW-0443">Lipid metabolism</keyword>
<keyword id="KW-0511">Multifunctional enzyme</keyword>
<keyword id="KW-0808">Transferase</keyword>
<gene>
    <name evidence="1" type="primary">fabH</name>
    <name type="ordered locus">COXBURSA331_A0602</name>
</gene>
<proteinExistence type="inferred from homology"/>
<name>FABH_COXBR</name>
<accession>A9NBY3</accession>